<protein>
    <recommendedName>
        <fullName evidence="1">NADH-quinone oxidoreductase subunit H</fullName>
        <ecNumber evidence="1">7.1.1.-</ecNumber>
    </recommendedName>
    <alternativeName>
        <fullName evidence="1">NADH dehydrogenase I subunit H</fullName>
    </alternativeName>
    <alternativeName>
        <fullName evidence="1">NDH-1 subunit H</fullName>
    </alternativeName>
</protein>
<feature type="chain" id="PRO_0000240119" description="NADH-quinone oxidoreductase subunit H">
    <location>
        <begin position="1"/>
        <end position="363"/>
    </location>
</feature>
<feature type="transmembrane region" description="Helical" evidence="1">
    <location>
        <begin position="29"/>
        <end position="49"/>
    </location>
</feature>
<feature type="transmembrane region" description="Helical" evidence="1">
    <location>
        <begin position="62"/>
        <end position="82"/>
    </location>
</feature>
<feature type="transmembrane region" description="Helical" evidence="1">
    <location>
        <begin position="96"/>
        <end position="116"/>
    </location>
</feature>
<feature type="transmembrane region" description="Helical" evidence="1">
    <location>
        <begin position="127"/>
        <end position="147"/>
    </location>
</feature>
<feature type="transmembrane region" description="Helical" evidence="1">
    <location>
        <begin position="163"/>
        <end position="183"/>
    </location>
</feature>
<feature type="transmembrane region" description="Helical" evidence="1">
    <location>
        <begin position="202"/>
        <end position="222"/>
    </location>
</feature>
<feature type="transmembrane region" description="Helical" evidence="1">
    <location>
        <begin position="239"/>
        <end position="257"/>
    </location>
</feature>
<feature type="transmembrane region" description="Helical" evidence="1">
    <location>
        <begin position="264"/>
        <end position="286"/>
    </location>
</feature>
<feature type="transmembrane region" description="Helical" evidence="1">
    <location>
        <begin position="299"/>
        <end position="319"/>
    </location>
</feature>
<feature type="transmembrane region" description="Helical" evidence="1">
    <location>
        <begin position="339"/>
        <end position="359"/>
    </location>
</feature>
<keyword id="KW-0997">Cell inner membrane</keyword>
<keyword id="KW-1003">Cell membrane</keyword>
<keyword id="KW-0472">Membrane</keyword>
<keyword id="KW-0520">NAD</keyword>
<keyword id="KW-0874">Quinone</keyword>
<keyword id="KW-1185">Reference proteome</keyword>
<keyword id="KW-1278">Translocase</keyword>
<keyword id="KW-0812">Transmembrane</keyword>
<keyword id="KW-1133">Transmembrane helix</keyword>
<keyword id="KW-0830">Ubiquinone</keyword>
<evidence type="ECO:0000255" key="1">
    <source>
        <dbReference type="HAMAP-Rule" id="MF_01350"/>
    </source>
</evidence>
<evidence type="ECO:0000305" key="2"/>
<accession>Q8P7T9</accession>
<organism>
    <name type="scientific">Xanthomonas campestris pv. campestris (strain ATCC 33913 / DSM 3586 / NCPPB 528 / LMG 568 / P 25)</name>
    <dbReference type="NCBI Taxonomy" id="190485"/>
    <lineage>
        <taxon>Bacteria</taxon>
        <taxon>Pseudomonadati</taxon>
        <taxon>Pseudomonadota</taxon>
        <taxon>Gammaproteobacteria</taxon>
        <taxon>Lysobacterales</taxon>
        <taxon>Lysobacteraceae</taxon>
        <taxon>Xanthomonas</taxon>
    </lineage>
</organism>
<dbReference type="EC" id="7.1.1.-" evidence="1"/>
<dbReference type="EMBL" id="AE008922">
    <property type="protein sequence ID" value="AAM41794.1"/>
    <property type="status" value="ALT_INIT"/>
    <property type="molecule type" value="Genomic_DNA"/>
</dbReference>
<dbReference type="RefSeq" id="NP_637870.2">
    <property type="nucleotide sequence ID" value="NC_003902.1"/>
</dbReference>
<dbReference type="RefSeq" id="WP_011037652.1">
    <property type="nucleotide sequence ID" value="NC_003902.1"/>
</dbReference>
<dbReference type="SMR" id="Q8P7T9"/>
<dbReference type="STRING" id="190485.XCC2521"/>
<dbReference type="EnsemblBacteria" id="AAM41794">
    <property type="protein sequence ID" value="AAM41794"/>
    <property type="gene ID" value="XCC2521"/>
</dbReference>
<dbReference type="KEGG" id="xcc:XCC2521"/>
<dbReference type="PATRIC" id="fig|190485.4.peg.2687"/>
<dbReference type="eggNOG" id="COG1005">
    <property type="taxonomic scope" value="Bacteria"/>
</dbReference>
<dbReference type="HOGENOM" id="CLU_015134_0_1_6"/>
<dbReference type="OrthoDB" id="9803734at2"/>
<dbReference type="Proteomes" id="UP000001010">
    <property type="component" value="Chromosome"/>
</dbReference>
<dbReference type="GO" id="GO:0005886">
    <property type="term" value="C:plasma membrane"/>
    <property type="evidence" value="ECO:0007669"/>
    <property type="project" value="UniProtKB-SubCell"/>
</dbReference>
<dbReference type="GO" id="GO:0045271">
    <property type="term" value="C:respiratory chain complex I"/>
    <property type="evidence" value="ECO:0000318"/>
    <property type="project" value="GO_Central"/>
</dbReference>
<dbReference type="GO" id="GO:0016655">
    <property type="term" value="F:oxidoreductase activity, acting on NAD(P)H, quinone or similar compound as acceptor"/>
    <property type="evidence" value="ECO:0007669"/>
    <property type="project" value="UniProtKB-UniRule"/>
</dbReference>
<dbReference type="GO" id="GO:0048038">
    <property type="term" value="F:quinone binding"/>
    <property type="evidence" value="ECO:0007669"/>
    <property type="project" value="UniProtKB-KW"/>
</dbReference>
<dbReference type="GO" id="GO:0009060">
    <property type="term" value="P:aerobic respiration"/>
    <property type="evidence" value="ECO:0000318"/>
    <property type="project" value="GO_Central"/>
</dbReference>
<dbReference type="HAMAP" id="MF_01350">
    <property type="entry name" value="NDH1_NuoH"/>
    <property type="match status" value="1"/>
</dbReference>
<dbReference type="InterPro" id="IPR001694">
    <property type="entry name" value="NADH_UbQ_OxRdtase_su1/FPO"/>
</dbReference>
<dbReference type="InterPro" id="IPR018086">
    <property type="entry name" value="NADH_UbQ_OxRdtase_su1_CS"/>
</dbReference>
<dbReference type="NCBIfam" id="NF004741">
    <property type="entry name" value="PRK06076.1-2"/>
    <property type="match status" value="1"/>
</dbReference>
<dbReference type="NCBIfam" id="NF004742">
    <property type="entry name" value="PRK06076.1-3"/>
    <property type="match status" value="1"/>
</dbReference>
<dbReference type="PANTHER" id="PTHR11432">
    <property type="entry name" value="NADH DEHYDROGENASE SUBUNIT 1"/>
    <property type="match status" value="1"/>
</dbReference>
<dbReference type="PANTHER" id="PTHR11432:SF3">
    <property type="entry name" value="NADH-UBIQUINONE OXIDOREDUCTASE CHAIN 1"/>
    <property type="match status" value="1"/>
</dbReference>
<dbReference type="Pfam" id="PF00146">
    <property type="entry name" value="NADHdh"/>
    <property type="match status" value="1"/>
</dbReference>
<dbReference type="PROSITE" id="PS00668">
    <property type="entry name" value="COMPLEX1_ND1_2"/>
    <property type="match status" value="1"/>
</dbReference>
<sequence length="363" mass="40453">MNELLLNVVDPLHQWFLGLGDGGVLLWTVLKILLIAVPVIVTVAFYVVWERKLIGWMHVRHGPMYVGMGIFQAFADVFKLLFKEILQPSSSHKAMFIIAPLLTLAPAFAAWSVVPFDAKLVLSNANVGLLYLLAMTSLGVYGIILAGWASNSKYAFLGAMRSAAQVVSYEIAMGFALVGVMIASGSVNLSQIVFAQAGSSGFFDWFLIPLFPLFIVYWVSGVAETNRAPFDVVEGESEIVAGHMVEYSGGAFALFFLAEYANMILVSFLISIFFLGGWLSPIQGWVTADISPWVNWLWTGGWPWLLMKVFFFASAYIWFRASFPRYRYDQIMRLGWKVFIPLTIVWIAVTALMVFYGVIQKGV</sequence>
<gene>
    <name evidence="1" type="primary">nuoH</name>
    <name type="ordered locus">XCC2521</name>
</gene>
<reference key="1">
    <citation type="journal article" date="2002" name="Nature">
        <title>Comparison of the genomes of two Xanthomonas pathogens with differing host specificities.</title>
        <authorList>
            <person name="da Silva A.C.R."/>
            <person name="Ferro J.A."/>
            <person name="Reinach F.C."/>
            <person name="Farah C.S."/>
            <person name="Furlan L.R."/>
            <person name="Quaggio R.B."/>
            <person name="Monteiro-Vitorello C.B."/>
            <person name="Van Sluys M.A."/>
            <person name="Almeida N.F. Jr."/>
            <person name="Alves L.M.C."/>
            <person name="do Amaral A.M."/>
            <person name="Bertolini M.C."/>
            <person name="Camargo L.E.A."/>
            <person name="Camarotte G."/>
            <person name="Cannavan F."/>
            <person name="Cardozo J."/>
            <person name="Chambergo F."/>
            <person name="Ciapina L.P."/>
            <person name="Cicarelli R.M.B."/>
            <person name="Coutinho L.L."/>
            <person name="Cursino-Santos J.R."/>
            <person name="El-Dorry H."/>
            <person name="Faria J.B."/>
            <person name="Ferreira A.J.S."/>
            <person name="Ferreira R.C.C."/>
            <person name="Ferro M.I.T."/>
            <person name="Formighieri E.F."/>
            <person name="Franco M.C."/>
            <person name="Greggio C.C."/>
            <person name="Gruber A."/>
            <person name="Katsuyama A.M."/>
            <person name="Kishi L.T."/>
            <person name="Leite R.P."/>
            <person name="Lemos E.G.M."/>
            <person name="Lemos M.V.F."/>
            <person name="Locali E.C."/>
            <person name="Machado M.A."/>
            <person name="Madeira A.M.B.N."/>
            <person name="Martinez-Rossi N.M."/>
            <person name="Martins E.C."/>
            <person name="Meidanis J."/>
            <person name="Menck C.F.M."/>
            <person name="Miyaki C.Y."/>
            <person name="Moon D.H."/>
            <person name="Moreira L.M."/>
            <person name="Novo M.T.M."/>
            <person name="Okura V.K."/>
            <person name="Oliveira M.C."/>
            <person name="Oliveira V.R."/>
            <person name="Pereira H.A."/>
            <person name="Rossi A."/>
            <person name="Sena J.A.D."/>
            <person name="Silva C."/>
            <person name="de Souza R.F."/>
            <person name="Spinola L.A.F."/>
            <person name="Takita M.A."/>
            <person name="Tamura R.E."/>
            <person name="Teixeira E.C."/>
            <person name="Tezza R.I.D."/>
            <person name="Trindade dos Santos M."/>
            <person name="Truffi D."/>
            <person name="Tsai S.M."/>
            <person name="White F.F."/>
            <person name="Setubal J.C."/>
            <person name="Kitajima J.P."/>
        </authorList>
    </citation>
    <scope>NUCLEOTIDE SEQUENCE [LARGE SCALE GENOMIC DNA]</scope>
    <source>
        <strain>ATCC 33913 / DSM 3586 / NCPPB 528 / LMG 568 / P 25</strain>
    </source>
</reference>
<comment type="function">
    <text evidence="1">NDH-1 shuttles electrons from NADH, via FMN and iron-sulfur (Fe-S) centers, to quinones in the respiratory chain. The immediate electron acceptor for the enzyme in this species is believed to be ubiquinone. Couples the redox reaction to proton translocation (for every two electrons transferred, four hydrogen ions are translocated across the cytoplasmic membrane), and thus conserves the redox energy in a proton gradient. This subunit may bind ubiquinone.</text>
</comment>
<comment type="catalytic activity">
    <reaction evidence="1">
        <text>a quinone + NADH + 5 H(+)(in) = a quinol + NAD(+) + 4 H(+)(out)</text>
        <dbReference type="Rhea" id="RHEA:57888"/>
        <dbReference type="ChEBI" id="CHEBI:15378"/>
        <dbReference type="ChEBI" id="CHEBI:24646"/>
        <dbReference type="ChEBI" id="CHEBI:57540"/>
        <dbReference type="ChEBI" id="CHEBI:57945"/>
        <dbReference type="ChEBI" id="CHEBI:132124"/>
    </reaction>
</comment>
<comment type="subunit">
    <text evidence="1">NDH-1 is composed of 14 different subunits. Subunits NuoA, H, J, K, L, M, N constitute the membrane sector of the complex.</text>
</comment>
<comment type="subcellular location">
    <subcellularLocation>
        <location evidence="1">Cell inner membrane</location>
        <topology evidence="1">Multi-pass membrane protein</topology>
    </subcellularLocation>
</comment>
<comment type="similarity">
    <text evidence="1">Belongs to the complex I subunit 1 family.</text>
</comment>
<comment type="sequence caution" evidence="2">
    <conflict type="erroneous initiation">
        <sequence resource="EMBL-CDS" id="AAM41794"/>
    </conflict>
</comment>
<proteinExistence type="inferred from homology"/>
<name>NUOH_XANCP</name>